<keyword id="KW-0010">Activator</keyword>
<keyword id="KW-0175">Coiled coil</keyword>
<keyword id="KW-0238">DNA-binding</keyword>
<keyword id="KW-0539">Nucleus</keyword>
<keyword id="KW-1185">Reference proteome</keyword>
<keyword id="KW-0804">Transcription</keyword>
<keyword id="KW-0805">Transcription regulation</keyword>
<organism>
    <name type="scientific">Triticum aestivum</name>
    <name type="common">Wheat</name>
    <dbReference type="NCBI Taxonomy" id="4565"/>
    <lineage>
        <taxon>Eukaryota</taxon>
        <taxon>Viridiplantae</taxon>
        <taxon>Streptophyta</taxon>
        <taxon>Embryophyta</taxon>
        <taxon>Tracheophyta</taxon>
        <taxon>Spermatophyta</taxon>
        <taxon>Magnoliopsida</taxon>
        <taxon>Liliopsida</taxon>
        <taxon>Poales</taxon>
        <taxon>Poaceae</taxon>
        <taxon>BOP clade</taxon>
        <taxon>Pooideae</taxon>
        <taxon>Triticodae</taxon>
        <taxon>Triticeae</taxon>
        <taxon>Triticinae</taxon>
        <taxon>Triticum</taxon>
    </lineage>
</organism>
<feature type="chain" id="PRO_0000076551" description="Transcription factor HBP-1b(c38)">
    <location>
        <begin position="1"/>
        <end position="332"/>
    </location>
</feature>
<feature type="domain" description="bZIP" evidence="2">
    <location>
        <begin position="44"/>
        <end position="107"/>
    </location>
</feature>
<feature type="domain" description="DOG1" evidence="3">
    <location>
        <begin position="111"/>
        <end position="329"/>
    </location>
</feature>
<feature type="region of interest" description="Disordered" evidence="4">
    <location>
        <begin position="1"/>
        <end position="48"/>
    </location>
</feature>
<feature type="region of interest" description="Basic motif" evidence="2">
    <location>
        <begin position="46"/>
        <end position="66"/>
    </location>
</feature>
<feature type="region of interest" description="Leucine-zipper" evidence="2">
    <location>
        <begin position="72"/>
        <end position="86"/>
    </location>
</feature>
<feature type="coiled-coil region" evidence="1">
    <location>
        <begin position="47"/>
        <end position="142"/>
    </location>
</feature>
<feature type="compositionally biased region" description="Basic and acidic residues" evidence="4">
    <location>
        <begin position="34"/>
        <end position="47"/>
    </location>
</feature>
<comment type="function">
    <text>Transcriptional activator that binds specifically to the DNA sequence 5'-TGACG-3'. Recognizes ocs elements like the as-1 motif of the cauliflower mosaic virus 35S promoter. Binding to the as-1-like cis elements mediate auxin- and salicylic acid-inducible transcription. Binds to the hexamer motif 5'-ACGTCA-3' of histone gene promoters.</text>
</comment>
<comment type="subunit">
    <text>Binds DNA as a dimer.</text>
</comment>
<comment type="subcellular location">
    <subcellularLocation>
        <location>Nucleus</location>
    </subcellularLocation>
</comment>
<comment type="similarity">
    <text evidence="5">Belongs to the bZIP family.</text>
</comment>
<evidence type="ECO:0000255" key="1"/>
<evidence type="ECO:0000255" key="2">
    <source>
        <dbReference type="PROSITE-ProRule" id="PRU00978"/>
    </source>
</evidence>
<evidence type="ECO:0000255" key="3">
    <source>
        <dbReference type="PROSITE-ProRule" id="PRU01147"/>
    </source>
</evidence>
<evidence type="ECO:0000256" key="4">
    <source>
        <dbReference type="SAM" id="MobiDB-lite"/>
    </source>
</evidence>
<evidence type="ECO:0000305" key="5"/>
<sequence>MAEASPRTETSTDDTDENLMLEPGNAALAVVSDSSDRSRDKNGDQKTMRRLAQNREAARKSRLRKKAYVQQLENSRLKLTQLEQELQRARQQGIFISSSADQSHSMSGNGALAFDTEYARWLEEHNRQVNELRAAVNAHAGDTELRSVVEKIMSHYDEIFKQKGNAAKADVFHVLSGMWKTPAERCFLWLGGFRPSELLKLLSTQLEPLTEQQLSGICNLQQSSQQAEDALSQGMEALQQSLAETLAGSIGSSGSGSTGNVANYMGQMAMAMGKLGTLENFLSQADNLRQQTLQQMQRILTTRQSARALLVISDYSSRLRALSSLWLARPKE</sequence>
<dbReference type="EMBL" id="X56782">
    <property type="protein sequence ID" value="CAA40102.1"/>
    <property type="molecule type" value="mRNA"/>
</dbReference>
<dbReference type="PIR" id="S15347">
    <property type="entry name" value="S15347"/>
</dbReference>
<dbReference type="SMR" id="P23923"/>
<dbReference type="STRING" id="4565.P23923"/>
<dbReference type="PaxDb" id="4565-Traes_3B_5CABEBCE5.2"/>
<dbReference type="EnsemblPlants" id="TraesARI3B03G01648880.1">
    <property type="protein sequence ID" value="TraesARI3B03G01648880.1"/>
    <property type="gene ID" value="TraesARI3B03G01648880"/>
</dbReference>
<dbReference type="EnsemblPlants" id="TraesARI3B03G01648880.2">
    <property type="protein sequence ID" value="TraesARI3B03G01648880.2"/>
    <property type="gene ID" value="TraesARI3B03G01648880"/>
</dbReference>
<dbReference type="EnsemblPlants" id="TraesJAG3B03G01632170.1">
    <property type="protein sequence ID" value="TraesJAG3B03G01632170.1"/>
    <property type="gene ID" value="TraesJAG3B03G01632170"/>
</dbReference>
<dbReference type="EnsemblPlants" id="TraesJAG3B03G01632170.2">
    <property type="protein sequence ID" value="TraesJAG3B03G01632170.2"/>
    <property type="gene ID" value="TraesJAG3B03G01632170"/>
</dbReference>
<dbReference type="EnsemblPlants" id="TraesJAG3B03G01632170.4">
    <property type="protein sequence ID" value="TraesJAG3B03G01632170.4"/>
    <property type="gene ID" value="TraesJAG3B03G01632170"/>
</dbReference>
<dbReference type="EnsemblPlants" id="TraesJUL3B03G01636660.1">
    <property type="protein sequence ID" value="TraesJUL3B03G01636660.1"/>
    <property type="gene ID" value="TraesJUL3B03G01636660"/>
</dbReference>
<dbReference type="EnsemblPlants" id="TraesJUL3B03G01636660.2">
    <property type="protein sequence ID" value="TraesJUL3B03G01636660.2"/>
    <property type="gene ID" value="TraesJUL3B03G01636660"/>
</dbReference>
<dbReference type="EnsemblPlants" id="TraesJUL3B03G01636660.3">
    <property type="protein sequence ID" value="TraesJUL3B03G01636660.3"/>
    <property type="gene ID" value="TraesJUL3B03G01636660"/>
</dbReference>
<dbReference type="EnsemblPlants" id="TraesKAR3B01G0185830.1">
    <property type="protein sequence ID" value="cds.TraesKAR3B01G0185830.1"/>
    <property type="gene ID" value="TraesKAR3B01G0185830"/>
</dbReference>
<dbReference type="EnsemblPlants" id="TraesLAC3B03G01565170.1">
    <property type="protein sequence ID" value="TraesLAC3B03G01565170.1"/>
    <property type="gene ID" value="TraesLAC3B03G01565170"/>
</dbReference>
<dbReference type="EnsemblPlants" id="TraesLAC3B03G01565170.2">
    <property type="protein sequence ID" value="TraesLAC3B03G01565170.2"/>
    <property type="gene ID" value="TraesLAC3B03G01565170"/>
</dbReference>
<dbReference type="EnsemblPlants" id="TraesLDM3B03G01623510.1">
    <property type="protein sequence ID" value="TraesLDM3B03G01623510.1"/>
    <property type="gene ID" value="TraesLDM3B03G01623510"/>
</dbReference>
<dbReference type="EnsemblPlants" id="TraesLDM3B03G01623510.2">
    <property type="protein sequence ID" value="TraesLDM3B03G01623510.2"/>
    <property type="gene ID" value="TraesLDM3B03G01623510"/>
</dbReference>
<dbReference type="EnsemblPlants" id="TraesLDM3B03G01623510.4">
    <property type="protein sequence ID" value="TraesLDM3B03G01623510.4"/>
    <property type="gene ID" value="TraesLDM3B03G01623510"/>
</dbReference>
<dbReference type="EnsemblPlants" id="TraesMAC3B03G01623260.1">
    <property type="protein sequence ID" value="TraesMAC3B03G01623260.1"/>
    <property type="gene ID" value="TraesMAC3B03G01623260"/>
</dbReference>
<dbReference type="EnsemblPlants" id="TraesMAC3B03G01623260.2">
    <property type="protein sequence ID" value="TraesMAC3B03G01623260.2"/>
    <property type="gene ID" value="TraesMAC3B03G01623260"/>
</dbReference>
<dbReference type="EnsemblPlants" id="TraesMAC3B03G01623260.3">
    <property type="protein sequence ID" value="TraesMAC3B03G01623260.3"/>
    <property type="gene ID" value="TraesMAC3B03G01623260"/>
</dbReference>
<dbReference type="EnsemblPlants" id="TraesMAC3B03G01623260.4">
    <property type="protein sequence ID" value="TraesMAC3B03G01623260.4"/>
    <property type="gene ID" value="TraesMAC3B03G01623260"/>
</dbReference>
<dbReference type="EnsemblPlants" id="TraesPARA_EIv1.0_0994850.1">
    <property type="protein sequence ID" value="TraesPARA_EIv1.0_0994850.1.CDS"/>
    <property type="gene ID" value="TraesPARA_EIv1.0_0994850"/>
</dbReference>
<dbReference type="EnsemblPlants" id="TraesPARA_EIv1.0_0994850.10">
    <property type="protein sequence ID" value="TraesPARA_EIv1.0_0994850.10.CDS"/>
    <property type="gene ID" value="TraesPARA_EIv1.0_0994850"/>
</dbReference>
<dbReference type="EnsemblPlants" id="TraesPARA_EIv1.0_0994850.11">
    <property type="protein sequence ID" value="TraesPARA_EIv1.0_0994850.11.CDS"/>
    <property type="gene ID" value="TraesPARA_EIv1.0_0994850"/>
</dbReference>
<dbReference type="EnsemblPlants" id="TraesPARA_EIv1.0_0994850.4">
    <property type="protein sequence ID" value="TraesPARA_EIv1.0_0994850.4.CDS"/>
    <property type="gene ID" value="TraesPARA_EIv1.0_0994850"/>
</dbReference>
<dbReference type="EnsemblPlants" id="TraesPARA_EIv1.0_0994850.5">
    <property type="protein sequence ID" value="TraesPARA_EIv1.0_0994850.5.CDS"/>
    <property type="gene ID" value="TraesPARA_EIv1.0_0994850"/>
</dbReference>
<dbReference type="EnsemblPlants" id="TraesPARA_EIv1.0_0994850.6">
    <property type="protein sequence ID" value="TraesPARA_EIv1.0_0994850.6.CDS"/>
    <property type="gene ID" value="TraesPARA_EIv1.0_0994850"/>
</dbReference>
<dbReference type="EnsemblPlants" id="TraesPARA_EIv1.0_0994850.8">
    <property type="protein sequence ID" value="TraesPARA_EIv1.0_0994850.8.CDS"/>
    <property type="gene ID" value="TraesPARA_EIv1.0_0994850"/>
</dbReference>
<dbReference type="EnsemblPlants" id="TraesPARA_EIv1.0_0994850.9">
    <property type="protein sequence ID" value="TraesPARA_EIv1.0_0994850.9.CDS"/>
    <property type="gene ID" value="TraesPARA_EIv1.0_0994850"/>
</dbReference>
<dbReference type="EnsemblPlants" id="TraesSTA3B03G01614430.1">
    <property type="protein sequence ID" value="TraesSTA3B03G01614430.1"/>
    <property type="gene ID" value="TraesSTA3B03G01614430"/>
</dbReference>
<dbReference type="EnsemblPlants" id="TraesSTA3B03G01614430.2">
    <property type="protein sequence ID" value="TraesSTA3B03G01614430.2"/>
    <property type="gene ID" value="TraesSTA3B03G01614430"/>
</dbReference>
<dbReference type="EnsemblPlants" id="TraesSYM3B03G01646510.2">
    <property type="protein sequence ID" value="TraesSYM3B03G01646510.2"/>
    <property type="gene ID" value="TraesSYM3B03G01646510"/>
</dbReference>
<dbReference type="EnsemblPlants" id="TraesSYM3B03G01646510.3">
    <property type="protein sequence ID" value="TraesSYM3B03G01646510.3"/>
    <property type="gene ID" value="TraesSYM3B03G01646510"/>
</dbReference>
<dbReference type="Gramene" id="TraesARI3B03G01648880.1">
    <property type="protein sequence ID" value="TraesARI3B03G01648880.1"/>
    <property type="gene ID" value="TraesARI3B03G01648880"/>
</dbReference>
<dbReference type="Gramene" id="TraesARI3B03G01648880.2">
    <property type="protein sequence ID" value="TraesARI3B03G01648880.2"/>
    <property type="gene ID" value="TraesARI3B03G01648880"/>
</dbReference>
<dbReference type="Gramene" id="TraesJAG3B03G01632170.1">
    <property type="protein sequence ID" value="TraesJAG3B03G01632170.1"/>
    <property type="gene ID" value="TraesJAG3B03G01632170"/>
</dbReference>
<dbReference type="Gramene" id="TraesJAG3B03G01632170.2">
    <property type="protein sequence ID" value="TraesJAG3B03G01632170.2"/>
    <property type="gene ID" value="TraesJAG3B03G01632170"/>
</dbReference>
<dbReference type="Gramene" id="TraesJAG3B03G01632170.4">
    <property type="protein sequence ID" value="TraesJAG3B03G01632170.4"/>
    <property type="gene ID" value="TraesJAG3B03G01632170"/>
</dbReference>
<dbReference type="Gramene" id="TraesJUL3B03G01636660.1">
    <property type="protein sequence ID" value="TraesJUL3B03G01636660.1"/>
    <property type="gene ID" value="TraesJUL3B03G01636660"/>
</dbReference>
<dbReference type="Gramene" id="TraesJUL3B03G01636660.2">
    <property type="protein sequence ID" value="TraesJUL3B03G01636660.2"/>
    <property type="gene ID" value="TraesJUL3B03G01636660"/>
</dbReference>
<dbReference type="Gramene" id="TraesJUL3B03G01636660.3">
    <property type="protein sequence ID" value="TraesJUL3B03G01636660.3"/>
    <property type="gene ID" value="TraesJUL3B03G01636660"/>
</dbReference>
<dbReference type="Gramene" id="TraesKAR3B01G0185830.1">
    <property type="protein sequence ID" value="cds.TraesKAR3B01G0185830.1"/>
    <property type="gene ID" value="TraesKAR3B01G0185830"/>
</dbReference>
<dbReference type="Gramene" id="TraesLAC3B03G01565170.1">
    <property type="protein sequence ID" value="TraesLAC3B03G01565170.1"/>
    <property type="gene ID" value="TraesLAC3B03G01565170"/>
</dbReference>
<dbReference type="Gramene" id="TraesLAC3B03G01565170.2">
    <property type="protein sequence ID" value="TraesLAC3B03G01565170.2"/>
    <property type="gene ID" value="TraesLAC3B03G01565170"/>
</dbReference>
<dbReference type="Gramene" id="TraesLDM3B03G01623510.1">
    <property type="protein sequence ID" value="TraesLDM3B03G01623510.1"/>
    <property type="gene ID" value="TraesLDM3B03G01623510"/>
</dbReference>
<dbReference type="Gramene" id="TraesLDM3B03G01623510.2">
    <property type="protein sequence ID" value="TraesLDM3B03G01623510.2"/>
    <property type="gene ID" value="TraesLDM3B03G01623510"/>
</dbReference>
<dbReference type="Gramene" id="TraesLDM3B03G01623510.4">
    <property type="protein sequence ID" value="TraesLDM3B03G01623510.4"/>
    <property type="gene ID" value="TraesLDM3B03G01623510"/>
</dbReference>
<dbReference type="Gramene" id="TraesMAC3B03G01623260.1">
    <property type="protein sequence ID" value="TraesMAC3B03G01623260.1"/>
    <property type="gene ID" value="TraesMAC3B03G01623260"/>
</dbReference>
<dbReference type="Gramene" id="TraesMAC3B03G01623260.2">
    <property type="protein sequence ID" value="TraesMAC3B03G01623260.2"/>
    <property type="gene ID" value="TraesMAC3B03G01623260"/>
</dbReference>
<dbReference type="Gramene" id="TraesMAC3B03G01623260.3">
    <property type="protein sequence ID" value="TraesMAC3B03G01623260.3"/>
    <property type="gene ID" value="TraesMAC3B03G01623260"/>
</dbReference>
<dbReference type="Gramene" id="TraesMAC3B03G01623260.4">
    <property type="protein sequence ID" value="TraesMAC3B03G01623260.4"/>
    <property type="gene ID" value="TraesMAC3B03G01623260"/>
</dbReference>
<dbReference type="Gramene" id="TraesPARA_EIv1.0_0994850.1">
    <property type="protein sequence ID" value="TraesPARA_EIv1.0_0994850.1.CDS"/>
    <property type="gene ID" value="TraesPARA_EIv1.0_0994850"/>
</dbReference>
<dbReference type="Gramene" id="TraesPARA_EIv1.0_0994850.10">
    <property type="protein sequence ID" value="TraesPARA_EIv1.0_0994850.10.CDS"/>
    <property type="gene ID" value="TraesPARA_EIv1.0_0994850"/>
</dbReference>
<dbReference type="Gramene" id="TraesPARA_EIv1.0_0994850.11">
    <property type="protein sequence ID" value="TraesPARA_EIv1.0_0994850.11.CDS"/>
    <property type="gene ID" value="TraesPARA_EIv1.0_0994850"/>
</dbReference>
<dbReference type="Gramene" id="TraesPARA_EIv1.0_0994850.4">
    <property type="protein sequence ID" value="TraesPARA_EIv1.0_0994850.4.CDS"/>
    <property type="gene ID" value="TraesPARA_EIv1.0_0994850"/>
</dbReference>
<dbReference type="Gramene" id="TraesPARA_EIv1.0_0994850.5">
    <property type="protein sequence ID" value="TraesPARA_EIv1.0_0994850.5.CDS"/>
    <property type="gene ID" value="TraesPARA_EIv1.0_0994850"/>
</dbReference>
<dbReference type="Gramene" id="TraesPARA_EIv1.0_0994850.6">
    <property type="protein sequence ID" value="TraesPARA_EIv1.0_0994850.6.CDS"/>
    <property type="gene ID" value="TraesPARA_EIv1.0_0994850"/>
</dbReference>
<dbReference type="Gramene" id="TraesPARA_EIv1.0_0994850.8">
    <property type="protein sequence ID" value="TraesPARA_EIv1.0_0994850.8.CDS"/>
    <property type="gene ID" value="TraesPARA_EIv1.0_0994850"/>
</dbReference>
<dbReference type="Gramene" id="TraesPARA_EIv1.0_0994850.9">
    <property type="protein sequence ID" value="TraesPARA_EIv1.0_0994850.9.CDS"/>
    <property type="gene ID" value="TraesPARA_EIv1.0_0994850"/>
</dbReference>
<dbReference type="Gramene" id="TraesSTA3B03G01614430.1">
    <property type="protein sequence ID" value="TraesSTA3B03G01614430.1"/>
    <property type="gene ID" value="TraesSTA3B03G01614430"/>
</dbReference>
<dbReference type="Gramene" id="TraesSTA3B03G01614430.2">
    <property type="protein sequence ID" value="TraesSTA3B03G01614430.2"/>
    <property type="gene ID" value="TraesSTA3B03G01614430"/>
</dbReference>
<dbReference type="Gramene" id="TraesSYM3B03G01646510.2">
    <property type="protein sequence ID" value="TraesSYM3B03G01646510.2"/>
    <property type="gene ID" value="TraesSYM3B03G01646510"/>
</dbReference>
<dbReference type="Gramene" id="TraesSYM3B03G01646510.3">
    <property type="protein sequence ID" value="TraesSYM3B03G01646510.3"/>
    <property type="gene ID" value="TraesSYM3B03G01646510"/>
</dbReference>
<dbReference type="eggNOG" id="ENOG502QU32">
    <property type="taxonomic scope" value="Eukaryota"/>
</dbReference>
<dbReference type="Proteomes" id="UP000019116">
    <property type="component" value="Unplaced"/>
</dbReference>
<dbReference type="ExpressionAtlas" id="P23923">
    <property type="expression patterns" value="baseline"/>
</dbReference>
<dbReference type="GO" id="GO:0005634">
    <property type="term" value="C:nucleus"/>
    <property type="evidence" value="ECO:0007669"/>
    <property type="project" value="UniProtKB-SubCell"/>
</dbReference>
<dbReference type="GO" id="GO:0003700">
    <property type="term" value="F:DNA-binding transcription factor activity"/>
    <property type="evidence" value="ECO:0007669"/>
    <property type="project" value="InterPro"/>
</dbReference>
<dbReference type="GO" id="GO:0043565">
    <property type="term" value="F:sequence-specific DNA binding"/>
    <property type="evidence" value="ECO:0007669"/>
    <property type="project" value="InterPro"/>
</dbReference>
<dbReference type="GO" id="GO:0006351">
    <property type="term" value="P:DNA-templated transcription"/>
    <property type="evidence" value="ECO:0007669"/>
    <property type="project" value="InterPro"/>
</dbReference>
<dbReference type="FunFam" id="1.20.5.170:FF:000019">
    <property type="entry name" value="BZIP family transcription factor"/>
    <property type="match status" value="1"/>
</dbReference>
<dbReference type="Gene3D" id="1.20.5.170">
    <property type="match status" value="1"/>
</dbReference>
<dbReference type="InterPro" id="IPR004827">
    <property type="entry name" value="bZIP"/>
</dbReference>
<dbReference type="InterPro" id="IPR046347">
    <property type="entry name" value="bZIP_sf"/>
</dbReference>
<dbReference type="InterPro" id="IPR025422">
    <property type="entry name" value="TGA_domain"/>
</dbReference>
<dbReference type="PANTHER" id="PTHR45693:SF46">
    <property type="entry name" value="TRANSCRIPTION FACTOR TGA2-RELATED"/>
    <property type="match status" value="1"/>
</dbReference>
<dbReference type="PANTHER" id="PTHR45693">
    <property type="entry name" value="TRANSCRIPTION FACTOR TGA9"/>
    <property type="match status" value="1"/>
</dbReference>
<dbReference type="Pfam" id="PF00170">
    <property type="entry name" value="bZIP_1"/>
    <property type="match status" value="1"/>
</dbReference>
<dbReference type="Pfam" id="PF14144">
    <property type="entry name" value="DOG1"/>
    <property type="match status" value="1"/>
</dbReference>
<dbReference type="SMART" id="SM00338">
    <property type="entry name" value="BRLZ"/>
    <property type="match status" value="1"/>
</dbReference>
<dbReference type="SUPFAM" id="SSF57959">
    <property type="entry name" value="Leucine zipper domain"/>
    <property type="match status" value="1"/>
</dbReference>
<dbReference type="PROSITE" id="PS50217">
    <property type="entry name" value="BZIP"/>
    <property type="match status" value="1"/>
</dbReference>
<dbReference type="PROSITE" id="PS00036">
    <property type="entry name" value="BZIP_BASIC"/>
    <property type="match status" value="1"/>
</dbReference>
<dbReference type="PROSITE" id="PS51806">
    <property type="entry name" value="DOG1"/>
    <property type="match status" value="1"/>
</dbReference>
<protein>
    <recommendedName>
        <fullName>Transcription factor HBP-1b(c38)</fullName>
    </recommendedName>
</protein>
<proteinExistence type="evidence at transcript level"/>
<reference key="1">
    <citation type="journal article" date="1991" name="EMBO J.">
        <title>HBP-1a and HBP-1b: leucine zipper-type transcription factors of wheat.</title>
        <authorList>
            <person name="Tabata T."/>
            <person name="Nakayama T."/>
            <person name="Mikami K."/>
            <person name="Iwabuchi M."/>
        </authorList>
    </citation>
    <scope>NUCLEOTIDE SEQUENCE [MRNA]</scope>
</reference>
<accession>P23923</accession>
<name>HBP1B_WHEAT</name>